<name>FETP_PSEPW</name>
<keyword id="KW-0408">Iron</keyword>
<accession>B1JED9</accession>
<reference key="1">
    <citation type="submission" date="2008-02" db="EMBL/GenBank/DDBJ databases">
        <title>Complete sequence of Pseudomonas putida W619.</title>
        <authorList>
            <person name="Copeland A."/>
            <person name="Lucas S."/>
            <person name="Lapidus A."/>
            <person name="Barry K."/>
            <person name="Detter J.C."/>
            <person name="Glavina del Rio T."/>
            <person name="Dalin E."/>
            <person name="Tice H."/>
            <person name="Pitluck S."/>
            <person name="Chain P."/>
            <person name="Malfatti S."/>
            <person name="Shin M."/>
            <person name="Vergez L."/>
            <person name="Schmutz J."/>
            <person name="Larimer F."/>
            <person name="Land M."/>
            <person name="Hauser L."/>
            <person name="Kyrpides N."/>
            <person name="Kim E."/>
            <person name="Taghavi S."/>
            <person name="Vangronsveld D."/>
            <person name="van der Lelie D."/>
            <person name="Richardson P."/>
        </authorList>
    </citation>
    <scope>NUCLEOTIDE SEQUENCE [LARGE SCALE GENOMIC DNA]</scope>
    <source>
        <strain>W619</strain>
    </source>
</reference>
<protein>
    <recommendedName>
        <fullName evidence="1">Probable Fe(2+)-trafficking protein</fullName>
    </recommendedName>
</protein>
<feature type="chain" id="PRO_1000131855" description="Probable Fe(2+)-trafficking protein">
    <location>
        <begin position="1"/>
        <end position="90"/>
    </location>
</feature>
<dbReference type="EMBL" id="CP000949">
    <property type="protein sequence ID" value="ACA75399.1"/>
    <property type="molecule type" value="Genomic_DNA"/>
</dbReference>
<dbReference type="SMR" id="B1JED9"/>
<dbReference type="STRING" id="390235.PputW619_4923"/>
<dbReference type="KEGG" id="ppw:PputW619_4923"/>
<dbReference type="eggNOG" id="COG2924">
    <property type="taxonomic scope" value="Bacteria"/>
</dbReference>
<dbReference type="HOGENOM" id="CLU_170994_0_0_6"/>
<dbReference type="OrthoDB" id="9804318at2"/>
<dbReference type="GO" id="GO:0005829">
    <property type="term" value="C:cytosol"/>
    <property type="evidence" value="ECO:0007669"/>
    <property type="project" value="TreeGrafter"/>
</dbReference>
<dbReference type="GO" id="GO:0005506">
    <property type="term" value="F:iron ion binding"/>
    <property type="evidence" value="ECO:0007669"/>
    <property type="project" value="UniProtKB-UniRule"/>
</dbReference>
<dbReference type="GO" id="GO:0034599">
    <property type="term" value="P:cellular response to oxidative stress"/>
    <property type="evidence" value="ECO:0007669"/>
    <property type="project" value="TreeGrafter"/>
</dbReference>
<dbReference type="FunFam" id="1.10.3880.10:FF:000001">
    <property type="entry name" value="Probable Fe(2+)-trafficking protein"/>
    <property type="match status" value="1"/>
</dbReference>
<dbReference type="Gene3D" id="1.10.3880.10">
    <property type="entry name" value="Fe(II) trafficking protein YggX"/>
    <property type="match status" value="1"/>
</dbReference>
<dbReference type="HAMAP" id="MF_00686">
    <property type="entry name" value="Fe_traffic_YggX"/>
    <property type="match status" value="1"/>
</dbReference>
<dbReference type="InterPro" id="IPR007457">
    <property type="entry name" value="Fe_traffick_prot_YggX"/>
</dbReference>
<dbReference type="InterPro" id="IPR036766">
    <property type="entry name" value="Fe_traffick_prot_YggX_sf"/>
</dbReference>
<dbReference type="NCBIfam" id="NF003817">
    <property type="entry name" value="PRK05408.1"/>
    <property type="match status" value="1"/>
</dbReference>
<dbReference type="PANTHER" id="PTHR36965">
    <property type="entry name" value="FE(2+)-TRAFFICKING PROTEIN-RELATED"/>
    <property type="match status" value="1"/>
</dbReference>
<dbReference type="PANTHER" id="PTHR36965:SF1">
    <property type="entry name" value="FE(2+)-TRAFFICKING PROTEIN-RELATED"/>
    <property type="match status" value="1"/>
</dbReference>
<dbReference type="Pfam" id="PF04362">
    <property type="entry name" value="Iron_traffic"/>
    <property type="match status" value="1"/>
</dbReference>
<dbReference type="PIRSF" id="PIRSF029827">
    <property type="entry name" value="Fe_traffic_YggX"/>
    <property type="match status" value="1"/>
</dbReference>
<dbReference type="SUPFAM" id="SSF111148">
    <property type="entry name" value="YggX-like"/>
    <property type="match status" value="1"/>
</dbReference>
<gene>
    <name type="ordered locus">PputW619_4923</name>
</gene>
<evidence type="ECO:0000255" key="1">
    <source>
        <dbReference type="HAMAP-Rule" id="MF_00686"/>
    </source>
</evidence>
<organism>
    <name type="scientific">Pseudomonas putida (strain W619)</name>
    <dbReference type="NCBI Taxonomy" id="390235"/>
    <lineage>
        <taxon>Bacteria</taxon>
        <taxon>Pseudomonadati</taxon>
        <taxon>Pseudomonadota</taxon>
        <taxon>Gammaproteobacteria</taxon>
        <taxon>Pseudomonadales</taxon>
        <taxon>Pseudomonadaceae</taxon>
        <taxon>Pseudomonas</taxon>
    </lineage>
</organism>
<sequence>MTRTVMCRKYKEQLPGLERPPYPGAKGQDIFEHISQQAWADWQKHQTMLINEKRLNMMNAEDRKYLQGEMDKFFAGEDYAQAEGYVPPAE</sequence>
<proteinExistence type="inferred from homology"/>
<comment type="function">
    <text evidence="1">Could be a mediator in iron transactions between iron acquisition and iron-requiring processes, such as synthesis and/or repair of Fe-S clusters in biosynthetic enzymes.</text>
</comment>
<comment type="similarity">
    <text evidence="1">Belongs to the Fe(2+)-trafficking protein family.</text>
</comment>